<sequence>MSRRYDSRTTIFSPEGRLYQVEYAMEAIGHAGTCLGILANDGVLLAAERRNIHKLLDEVFFSEKIYKLNEDMACSVAGITSDANVLTNELRLIAQRYLLQYQEPIPCEQLVTALCDIKQAYTQFGGKRPFGVSLLYIGWDKHYGFQLYQSDPSGNYGGWKATCIGNNSAAAVSMLKQDYKEGEMTLKSALALAIKVLNKTMDVSKLSAEKVEIATLTRENGKTVIRVLKQKEVEQLIKKHEEEEAKAEREKKEKEQKEKDK</sequence>
<protein>
    <recommendedName>
        <fullName evidence="18">Proteasome subunit alpha type-4</fullName>
    </recommendedName>
    <alternativeName>
        <fullName>Macropain subunit C9</fullName>
    </alternativeName>
    <alternativeName>
        <fullName>Multicatalytic endopeptidase complex subunit C9</fullName>
    </alternativeName>
    <alternativeName>
        <fullName>Proteasome component C9</fullName>
    </alternativeName>
    <alternativeName>
        <fullName>Proteasome subunit L</fullName>
    </alternativeName>
    <alternativeName>
        <fullName evidence="17">Proteasome subunit alpha-3</fullName>
        <shortName evidence="17">alpha-3</shortName>
    </alternativeName>
</protein>
<accession>P25789</accession>
<accession>D3DW86</accession>
<accession>Q53XP2</accession>
<accession>Q567Q5</accession>
<accession>Q8TBD1</accession>
<proteinExistence type="evidence at protein level"/>
<organism>
    <name type="scientific">Homo sapiens</name>
    <name type="common">Human</name>
    <dbReference type="NCBI Taxonomy" id="9606"/>
    <lineage>
        <taxon>Eukaryota</taxon>
        <taxon>Metazoa</taxon>
        <taxon>Chordata</taxon>
        <taxon>Craniata</taxon>
        <taxon>Vertebrata</taxon>
        <taxon>Euteleostomi</taxon>
        <taxon>Mammalia</taxon>
        <taxon>Eutheria</taxon>
        <taxon>Euarchontoglires</taxon>
        <taxon>Primates</taxon>
        <taxon>Haplorrhini</taxon>
        <taxon>Catarrhini</taxon>
        <taxon>Hominidae</taxon>
        <taxon>Homo</taxon>
    </lineage>
</organism>
<name>PSA4_HUMAN</name>
<feature type="chain" id="PRO_0000124103" description="Proteasome subunit alpha type-4">
    <location>
        <begin position="1"/>
        <end position="261"/>
    </location>
</feature>
<feature type="region of interest" description="Disordered" evidence="3">
    <location>
        <begin position="240"/>
        <end position="261"/>
    </location>
</feature>
<feature type="modified residue" description="Phosphoserine" evidence="21 23 24">
    <location>
        <position position="13"/>
    </location>
</feature>
<feature type="modified residue" description="Phosphoserine" evidence="20">
    <location>
        <position position="75"/>
    </location>
</feature>
<feature type="modified residue" description="N6-acetyllysine" evidence="22">
    <location>
        <position position="127"/>
    </location>
</feature>
<feature type="modified residue" description="Phosphoserine" evidence="25">
    <location>
        <position position="173"/>
    </location>
</feature>
<feature type="modified residue" description="N6-acetyllysine" evidence="22">
    <location>
        <position position="176"/>
    </location>
</feature>
<feature type="splice variant" id="VSP_043102" description="In isoform 2." evidence="16">
    <location>
        <begin position="1"/>
        <end position="71"/>
    </location>
</feature>
<feature type="turn" evidence="26">
    <location>
        <begin position="3"/>
        <end position="5"/>
    </location>
</feature>
<feature type="strand" evidence="31">
    <location>
        <begin position="7"/>
        <end position="9"/>
    </location>
</feature>
<feature type="turn" evidence="29">
    <location>
        <begin position="14"/>
        <end position="16"/>
    </location>
</feature>
<feature type="helix" evidence="26">
    <location>
        <begin position="19"/>
        <end position="29"/>
    </location>
</feature>
<feature type="strand" evidence="26">
    <location>
        <begin position="34"/>
        <end position="39"/>
    </location>
</feature>
<feature type="strand" evidence="26">
    <location>
        <begin position="42"/>
        <end position="48"/>
    </location>
</feature>
<feature type="strand" evidence="30">
    <location>
        <begin position="54"/>
        <end position="56"/>
    </location>
</feature>
<feature type="turn" evidence="28">
    <location>
        <begin position="59"/>
        <end position="61"/>
    </location>
</feature>
<feature type="strand" evidence="26">
    <location>
        <begin position="63"/>
        <end position="69"/>
    </location>
</feature>
<feature type="strand" evidence="26">
    <location>
        <begin position="72"/>
        <end position="78"/>
    </location>
</feature>
<feature type="helix" evidence="26">
    <location>
        <begin position="80"/>
        <end position="101"/>
    </location>
</feature>
<feature type="helix" evidence="26">
    <location>
        <begin position="107"/>
        <end position="123"/>
    </location>
</feature>
<feature type="strand" evidence="26">
    <location>
        <begin position="124"/>
        <end position="126"/>
    </location>
</feature>
<feature type="strand" evidence="26">
    <location>
        <begin position="132"/>
        <end position="140"/>
    </location>
</feature>
<feature type="turn" evidence="26">
    <location>
        <begin position="141"/>
        <end position="143"/>
    </location>
</feature>
<feature type="strand" evidence="26">
    <location>
        <begin position="144"/>
        <end position="150"/>
    </location>
</feature>
<feature type="turn" evidence="27">
    <location>
        <begin position="152"/>
        <end position="154"/>
    </location>
</feature>
<feature type="strand" evidence="26">
    <location>
        <begin position="156"/>
        <end position="165"/>
    </location>
</feature>
<feature type="helix" evidence="26">
    <location>
        <begin position="168"/>
        <end position="178"/>
    </location>
</feature>
<feature type="turn" evidence="26">
    <location>
        <begin position="181"/>
        <end position="183"/>
    </location>
</feature>
<feature type="helix" evidence="26">
    <location>
        <begin position="186"/>
        <end position="200"/>
    </location>
</feature>
<feature type="strand" evidence="26">
    <location>
        <begin position="203"/>
        <end position="205"/>
    </location>
</feature>
<feature type="helix" evidence="26">
    <location>
        <begin position="208"/>
        <end position="210"/>
    </location>
</feature>
<feature type="strand" evidence="26">
    <location>
        <begin position="211"/>
        <end position="219"/>
    </location>
</feature>
<feature type="strand" evidence="26">
    <location>
        <begin position="222"/>
        <end position="227"/>
    </location>
</feature>
<feature type="helix" evidence="26">
    <location>
        <begin position="230"/>
        <end position="246"/>
    </location>
</feature>
<feature type="helix" evidence="29">
    <location>
        <begin position="249"/>
        <end position="252"/>
    </location>
</feature>
<feature type="turn" evidence="29">
    <location>
        <begin position="254"/>
        <end position="256"/>
    </location>
</feature>
<gene>
    <name evidence="19" type="primary">PSMA4</name>
    <name type="synonym">HC9</name>
    <name type="synonym">PSC9</name>
</gene>
<keyword id="KW-0002">3D-structure</keyword>
<keyword id="KW-0007">Acetylation</keyword>
<keyword id="KW-0025">Alternative splicing</keyword>
<keyword id="KW-0963">Cytoplasm</keyword>
<keyword id="KW-0903">Direct protein sequencing</keyword>
<keyword id="KW-0945">Host-virus interaction</keyword>
<keyword id="KW-0539">Nucleus</keyword>
<keyword id="KW-0597">Phosphoprotein</keyword>
<keyword id="KW-0647">Proteasome</keyword>
<keyword id="KW-1267">Proteomics identification</keyword>
<keyword id="KW-1185">Reference proteome</keyword>
<evidence type="ECO:0000250" key="1">
    <source>
        <dbReference type="UniProtKB" id="Q9R1P0"/>
    </source>
</evidence>
<evidence type="ECO:0000255" key="2">
    <source>
        <dbReference type="PROSITE-ProRule" id="PRU00808"/>
    </source>
</evidence>
<evidence type="ECO:0000256" key="3">
    <source>
        <dbReference type="SAM" id="MobiDB-lite"/>
    </source>
</evidence>
<evidence type="ECO:0000269" key="4">
    <source>
    </source>
</evidence>
<evidence type="ECO:0000269" key="5">
    <source>
    </source>
</evidence>
<evidence type="ECO:0000269" key="6">
    <source>
    </source>
</evidence>
<evidence type="ECO:0000269" key="7">
    <source>
    </source>
</evidence>
<evidence type="ECO:0000269" key="8">
    <source>
    </source>
</evidence>
<evidence type="ECO:0000269" key="9">
    <source>
    </source>
</evidence>
<evidence type="ECO:0000269" key="10">
    <source>
    </source>
</evidence>
<evidence type="ECO:0000269" key="11">
    <source>
    </source>
</evidence>
<evidence type="ECO:0000269" key="12">
    <source>
    </source>
</evidence>
<evidence type="ECO:0000269" key="13">
    <source>
    </source>
</evidence>
<evidence type="ECO:0000269" key="14">
    <source>
    </source>
</evidence>
<evidence type="ECO:0000269" key="15">
    <source>
    </source>
</evidence>
<evidence type="ECO:0000303" key="16">
    <source>
    </source>
</evidence>
<evidence type="ECO:0000303" key="17">
    <source>
    </source>
</evidence>
<evidence type="ECO:0000305" key="18"/>
<evidence type="ECO:0000312" key="19">
    <source>
        <dbReference type="HGNC" id="HGNC:9533"/>
    </source>
</evidence>
<evidence type="ECO:0007744" key="20">
    <source>
    </source>
</evidence>
<evidence type="ECO:0007744" key="21">
    <source>
    </source>
</evidence>
<evidence type="ECO:0007744" key="22">
    <source>
    </source>
</evidence>
<evidence type="ECO:0007744" key="23">
    <source>
    </source>
</evidence>
<evidence type="ECO:0007744" key="24">
    <source>
    </source>
</evidence>
<evidence type="ECO:0007744" key="25">
    <source>
    </source>
</evidence>
<evidence type="ECO:0007829" key="26">
    <source>
        <dbReference type="PDB" id="5LE5"/>
    </source>
</evidence>
<evidence type="ECO:0007829" key="27">
    <source>
        <dbReference type="PDB" id="6E5B"/>
    </source>
</evidence>
<evidence type="ECO:0007829" key="28">
    <source>
        <dbReference type="PDB" id="6KWY"/>
    </source>
</evidence>
<evidence type="ECO:0007829" key="29">
    <source>
        <dbReference type="PDB" id="7AWE"/>
    </source>
</evidence>
<evidence type="ECO:0007829" key="30">
    <source>
        <dbReference type="PDB" id="8CVR"/>
    </source>
</evidence>
<evidence type="ECO:0007829" key="31">
    <source>
        <dbReference type="PDB" id="8CXB"/>
    </source>
</evidence>
<reference key="1">
    <citation type="journal article" date="1991" name="Biochim. Biophys. Acta">
        <title>Molecular cloning and sequence analysis of cDNAs for five major subunits of human proteasomes (multi-catalytic proteinase complexes).</title>
        <authorList>
            <person name="Tamura T."/>
            <person name="Lee D.H."/>
            <person name="Osaka F."/>
            <person name="Fujiwara T."/>
            <person name="Shin S."/>
            <person name="Chung C.H."/>
            <person name="Tanaka K."/>
            <person name="Ichihara A."/>
        </authorList>
    </citation>
    <scope>NUCLEOTIDE SEQUENCE [MRNA] (ISOFORM 1)</scope>
</reference>
<reference key="2">
    <citation type="submission" date="2003-08" db="EMBL/GenBank/DDBJ databases">
        <title>Cloning of human full-length CDSs in BD Creator(TM) system donor vector.</title>
        <authorList>
            <person name="Kalnine N."/>
            <person name="Chen X."/>
            <person name="Rolfs A."/>
            <person name="Halleck A."/>
            <person name="Hines L."/>
            <person name="Eisenstein S."/>
            <person name="Koundinya M."/>
            <person name="Raphael J."/>
            <person name="Moreira D."/>
            <person name="Kelley T."/>
            <person name="LaBaer J."/>
            <person name="Lin Y."/>
            <person name="Phelan M."/>
            <person name="Farmer A."/>
        </authorList>
    </citation>
    <scope>NUCLEOTIDE SEQUENCE [LARGE SCALE MRNA] (ISOFORM 1)</scope>
</reference>
<reference key="3">
    <citation type="journal article" date="2006" name="Nature">
        <title>Analysis of the DNA sequence and duplication history of human chromosome 15.</title>
        <authorList>
            <person name="Zody M.C."/>
            <person name="Garber M."/>
            <person name="Sharpe T."/>
            <person name="Young S.K."/>
            <person name="Rowen L."/>
            <person name="O'Neill K."/>
            <person name="Whittaker C.A."/>
            <person name="Kamal M."/>
            <person name="Chang J.L."/>
            <person name="Cuomo C.A."/>
            <person name="Dewar K."/>
            <person name="FitzGerald M.G."/>
            <person name="Kodira C.D."/>
            <person name="Madan A."/>
            <person name="Qin S."/>
            <person name="Yang X."/>
            <person name="Abbasi N."/>
            <person name="Abouelleil A."/>
            <person name="Arachchi H.M."/>
            <person name="Baradarani L."/>
            <person name="Birditt B."/>
            <person name="Bloom S."/>
            <person name="Bloom T."/>
            <person name="Borowsky M.L."/>
            <person name="Burke J."/>
            <person name="Butler J."/>
            <person name="Cook A."/>
            <person name="DeArellano K."/>
            <person name="DeCaprio D."/>
            <person name="Dorris L. III"/>
            <person name="Dors M."/>
            <person name="Eichler E.E."/>
            <person name="Engels R."/>
            <person name="Fahey J."/>
            <person name="Fleetwood P."/>
            <person name="Friedman C."/>
            <person name="Gearin G."/>
            <person name="Hall J.L."/>
            <person name="Hensley G."/>
            <person name="Johnson E."/>
            <person name="Jones C."/>
            <person name="Kamat A."/>
            <person name="Kaur A."/>
            <person name="Locke D.P."/>
            <person name="Madan A."/>
            <person name="Munson G."/>
            <person name="Jaffe D.B."/>
            <person name="Lui A."/>
            <person name="Macdonald P."/>
            <person name="Mauceli E."/>
            <person name="Naylor J.W."/>
            <person name="Nesbitt R."/>
            <person name="Nicol R."/>
            <person name="O'Leary S.B."/>
            <person name="Ratcliffe A."/>
            <person name="Rounsley S."/>
            <person name="She X."/>
            <person name="Sneddon K.M.B."/>
            <person name="Stewart S."/>
            <person name="Sougnez C."/>
            <person name="Stone S.M."/>
            <person name="Topham K."/>
            <person name="Vincent D."/>
            <person name="Wang S."/>
            <person name="Zimmer A.R."/>
            <person name="Birren B.W."/>
            <person name="Hood L."/>
            <person name="Lander E.S."/>
            <person name="Nusbaum C."/>
        </authorList>
    </citation>
    <scope>NUCLEOTIDE SEQUENCE [LARGE SCALE GENOMIC DNA]</scope>
</reference>
<reference key="4">
    <citation type="submission" date="2005-09" db="EMBL/GenBank/DDBJ databases">
        <authorList>
            <person name="Mural R.J."/>
            <person name="Istrail S."/>
            <person name="Sutton G.G."/>
            <person name="Florea L."/>
            <person name="Halpern A.L."/>
            <person name="Mobarry C.M."/>
            <person name="Lippert R."/>
            <person name="Walenz B."/>
            <person name="Shatkay H."/>
            <person name="Dew I."/>
            <person name="Miller J.R."/>
            <person name="Flanigan M.J."/>
            <person name="Edwards N.J."/>
            <person name="Bolanos R."/>
            <person name="Fasulo D."/>
            <person name="Halldorsson B.V."/>
            <person name="Hannenhalli S."/>
            <person name="Turner R."/>
            <person name="Yooseph S."/>
            <person name="Lu F."/>
            <person name="Nusskern D.R."/>
            <person name="Shue B.C."/>
            <person name="Zheng X.H."/>
            <person name="Zhong F."/>
            <person name="Delcher A.L."/>
            <person name="Huson D.H."/>
            <person name="Kravitz S.A."/>
            <person name="Mouchard L."/>
            <person name="Reinert K."/>
            <person name="Remington K.A."/>
            <person name="Clark A.G."/>
            <person name="Waterman M.S."/>
            <person name="Eichler E.E."/>
            <person name="Adams M.D."/>
            <person name="Hunkapiller M.W."/>
            <person name="Myers E.W."/>
            <person name="Venter J.C."/>
        </authorList>
    </citation>
    <scope>NUCLEOTIDE SEQUENCE [LARGE SCALE GENOMIC DNA]</scope>
</reference>
<reference key="5">
    <citation type="journal article" date="2004" name="Genome Res.">
        <title>The status, quality, and expansion of the NIH full-length cDNA project: the Mammalian Gene Collection (MGC).</title>
        <authorList>
            <consortium name="The MGC Project Team"/>
        </authorList>
    </citation>
    <scope>NUCLEOTIDE SEQUENCE [LARGE SCALE MRNA] (ISOFORMS 1 AND 2)</scope>
    <source>
        <tissue>Blood</tissue>
        <tissue>Brain</tissue>
        <tissue>Lung</tissue>
        <tissue>Pancreas</tissue>
        <tissue>Urinary bladder</tissue>
    </source>
</reference>
<reference key="6">
    <citation type="journal article" date="1994" name="Biochem. Biophys. Res. Commun.">
        <title>Human proteasome subunits from 2-dimensional gels identified by partial sequencing.</title>
        <authorList>
            <person name="Kristensen P."/>
            <person name="Johnsen A.H."/>
            <person name="Uerkvitz W."/>
            <person name="Tanaka K."/>
            <person name="Hendil K.B."/>
        </authorList>
    </citation>
    <scope>PROTEIN SEQUENCE OF 18-39</scope>
</reference>
<reference key="7">
    <citation type="journal article" date="1996" name="Nature">
        <title>A role for the proteasome regulator PA28alpha in antigen presentation.</title>
        <authorList>
            <person name="Groettrup M."/>
            <person name="Soza A."/>
            <person name="Eggers M."/>
            <person name="Kuehn L."/>
            <person name="Dick T.P."/>
            <person name="Schild H."/>
            <person name="Rammensee H.G."/>
            <person name="Koszinowski U.H."/>
            <person name="Kloetzel P.M."/>
        </authorList>
    </citation>
    <scope>FUNCTION IN ANTIGEN PRESENTATION</scope>
</reference>
<reference key="8">
    <citation type="journal article" date="1996" name="Nature">
        <title>Effects on NF-kappa B1/p105 processing of the interaction between the HTLV-1 transactivator Tax and the proteasome.</title>
        <authorList>
            <person name="Rousset R."/>
            <person name="Desbois C."/>
            <person name="Bantignies F."/>
            <person name="Jalinot P."/>
        </authorList>
    </citation>
    <scope>INTERACTION WITH HTLV-1 TAX (MICROBIAL INFECTION)</scope>
</reference>
<reference key="9">
    <citation type="journal article" date="2000" name="J. Atheroscler. Thromb.">
        <title>Gene expression induced by BO-653, probucol and BHQ in human endothelial cells.</title>
        <authorList>
            <person name="Takabe W."/>
            <person name="Mataki C."/>
            <person name="Wada Y."/>
            <person name="Ishii M."/>
            <person name="Izumi A."/>
            <person name="Aburatani H."/>
            <person name="Hamakubo T."/>
            <person name="Niki E."/>
            <person name="Kodama T."/>
            <person name="Noguchi N."/>
        </authorList>
    </citation>
    <scope>INDUCTION BY BO-653 AND PROBUCOL</scope>
</reference>
<reference key="10">
    <citation type="journal article" date="2002" name="Mol. Biol. Cell">
        <title>Clastosome: a subtype of nuclear body enriched in 19S and 20S proteasomes, ubiquitin, and protein substrates of proteasome.</title>
        <authorList>
            <person name="Lafarga M."/>
            <person name="Berciano M.T."/>
            <person name="Pena E."/>
            <person name="Mayo I."/>
            <person name="Castano J.G."/>
            <person name="Bohmann D."/>
            <person name="Rodrigues J.P."/>
            <person name="Tavanez J.P."/>
            <person name="Carmo-Fonseca M."/>
        </authorList>
    </citation>
    <scope>SUBCELLULAR LOCATION</scope>
</reference>
<reference key="11">
    <citation type="journal article" date="2004" name="Biomacromolecules">
        <title>20S proteasome prevents aggregation of heat-denatured proteins without PA700 regulatory subcomplex like a molecular chaperone.</title>
        <authorList>
            <person name="Yano M."/>
            <person name="Koumoto Y."/>
            <person name="Kanesaki Y."/>
            <person name="Wu X."/>
            <person name="Kido H."/>
        </authorList>
    </citation>
    <scope>FUNCTION</scope>
</reference>
<reference key="12">
    <citation type="journal article" date="2007" name="Biochemistry">
        <title>Mass spectrometric characterization of the affinity-purified human 26S proteasome complex.</title>
        <authorList>
            <person name="Wang X."/>
            <person name="Chen C.-F."/>
            <person name="Baker P.R."/>
            <person name="Chen P.-L."/>
            <person name="Kaiser P."/>
            <person name="Huang L."/>
        </authorList>
    </citation>
    <scope>PHOSPHORYLATION [LARGE SCALE ANALYSIS] AT SER-75</scope>
    <scope>IDENTIFICATION BY MASS SPECTROMETRY [LARGE SCALE ANALYSIS]</scope>
    <source>
        <tissue>Embryonic kidney</tissue>
    </source>
</reference>
<reference key="13">
    <citation type="journal article" date="2008" name="Proc. Natl. Acad. Sci. U.S.A.">
        <title>A quantitative atlas of mitotic phosphorylation.</title>
        <authorList>
            <person name="Dephoure N."/>
            <person name="Zhou C."/>
            <person name="Villen J."/>
            <person name="Beausoleil S.A."/>
            <person name="Bakalarski C.E."/>
            <person name="Elledge S.J."/>
            <person name="Gygi S.P."/>
        </authorList>
    </citation>
    <scope>PHOSPHORYLATION [LARGE SCALE ANALYSIS] AT SER-13</scope>
    <scope>IDENTIFICATION BY MASS SPECTROMETRY [LARGE SCALE ANALYSIS]</scope>
    <source>
        <tissue>Cervix carcinoma</tissue>
    </source>
</reference>
<reference key="14">
    <citation type="journal article" date="2009" name="Science">
        <title>Lysine acetylation targets protein complexes and co-regulates major cellular functions.</title>
        <authorList>
            <person name="Choudhary C."/>
            <person name="Kumar C."/>
            <person name="Gnad F."/>
            <person name="Nielsen M.L."/>
            <person name="Rehman M."/>
            <person name="Walther T.C."/>
            <person name="Olsen J.V."/>
            <person name="Mann M."/>
        </authorList>
    </citation>
    <scope>ACETYLATION [LARGE SCALE ANALYSIS] AT LYS-127 AND LYS-176</scope>
    <scope>IDENTIFICATION BY MASS SPECTROMETRY [LARGE SCALE ANALYSIS]</scope>
</reference>
<reference key="15">
    <citation type="journal article" date="2010" name="Sci. Signal.">
        <title>Quantitative phosphoproteomics reveals widespread full phosphorylation site occupancy during mitosis.</title>
        <authorList>
            <person name="Olsen J.V."/>
            <person name="Vermeulen M."/>
            <person name="Santamaria A."/>
            <person name="Kumar C."/>
            <person name="Miller M.L."/>
            <person name="Jensen L.J."/>
            <person name="Gnad F."/>
            <person name="Cox J."/>
            <person name="Jensen T.S."/>
            <person name="Nigg E.A."/>
            <person name="Brunak S."/>
            <person name="Mann M."/>
        </authorList>
    </citation>
    <scope>PHOSPHORYLATION [LARGE SCALE ANALYSIS] AT SER-13</scope>
    <scope>IDENTIFICATION BY MASS SPECTROMETRY [LARGE SCALE ANALYSIS]</scope>
    <source>
        <tissue>Cervix carcinoma</tissue>
    </source>
</reference>
<reference key="16">
    <citation type="journal article" date="2011" name="BMC Syst. Biol.">
        <title>Initial characterization of the human central proteome.</title>
        <authorList>
            <person name="Burkard T.R."/>
            <person name="Planyavsky M."/>
            <person name="Kaupe I."/>
            <person name="Breitwieser F.P."/>
            <person name="Buerckstuemmer T."/>
            <person name="Bennett K.L."/>
            <person name="Superti-Furga G."/>
            <person name="Colinge J."/>
        </authorList>
    </citation>
    <scope>IDENTIFICATION BY MASS SPECTROMETRY [LARGE SCALE ANALYSIS]</scope>
</reference>
<reference key="17">
    <citation type="journal article" date="2013" name="Annu. Rev. Biochem.">
        <title>Molecular architecture and assembly of the eukaryotic proteasome.</title>
        <authorList>
            <person name="Tomko R.J. Jr."/>
            <person name="Hochstrasser M."/>
        </authorList>
    </citation>
    <scope>NOMENCLATURE</scope>
</reference>
<reference key="18">
    <citation type="journal article" date="2013" name="J. Proteome Res.">
        <title>Toward a comprehensive characterization of a human cancer cell phosphoproteome.</title>
        <authorList>
            <person name="Zhou H."/>
            <person name="Di Palma S."/>
            <person name="Preisinger C."/>
            <person name="Peng M."/>
            <person name="Polat A.N."/>
            <person name="Heck A.J."/>
            <person name="Mohammed S."/>
        </authorList>
    </citation>
    <scope>PHOSPHORYLATION [LARGE SCALE ANALYSIS] AT SER-13</scope>
    <scope>IDENTIFICATION BY MASS SPECTROMETRY [LARGE SCALE ANALYSIS]</scope>
    <source>
        <tissue>Cervix carcinoma</tissue>
        <tissue>Erythroleukemia</tissue>
    </source>
</reference>
<reference key="19">
    <citation type="journal article" date="2014" name="J. Proteomics">
        <title>An enzyme assisted RP-RPLC approach for in-depth analysis of human liver phosphoproteome.</title>
        <authorList>
            <person name="Bian Y."/>
            <person name="Song C."/>
            <person name="Cheng K."/>
            <person name="Dong M."/>
            <person name="Wang F."/>
            <person name="Huang J."/>
            <person name="Sun D."/>
            <person name="Wang L."/>
            <person name="Ye M."/>
            <person name="Zou H."/>
        </authorList>
    </citation>
    <scope>PHOSPHORYLATION [LARGE SCALE ANALYSIS] AT SER-173</scope>
    <scope>IDENTIFICATION BY MASS SPECTROMETRY [LARGE SCALE ANALYSIS]</scope>
    <source>
        <tissue>Liver</tissue>
    </source>
</reference>
<reference key="20">
    <citation type="journal article" date="2016" name="Biol. Chem.">
        <title>Human 20S proteasome activity towards fluorogenic peptides of various chain lengths.</title>
        <authorList>
            <person name="Rut W."/>
            <person name="Drag M."/>
        </authorList>
    </citation>
    <scope>FUNCTION</scope>
    <scope>CATALYTIC ACTIVITY</scope>
</reference>
<reference key="21">
    <citation type="journal article" date="2015" name="Nat. Commun.">
        <title>Cryo-EM reveals the conformation of a substrate analogue in the human 20S proteasome core.</title>
        <authorList>
            <person name="da Fonseca P.C."/>
            <person name="Morris E.P."/>
        </authorList>
    </citation>
    <scope>STRUCTURE BY ELECTRON MICROSCOPY (3.50 ANGSTROMS)</scope>
    <scope>SUBUNIT</scope>
</reference>
<reference key="22">
    <citation type="journal article" date="2015" name="Structure">
        <title>Crystal structure of the human 20S proteasome in complex with carfilzomib.</title>
        <authorList>
            <person name="Harshbarger W."/>
            <person name="Miller C."/>
            <person name="Diedrich C."/>
            <person name="Sacchettini J."/>
        </authorList>
    </citation>
    <scope>X-RAY CRYSTALLOGRAPHY (2.60 ANGSTROMS) OF 2-251</scope>
    <scope>SUBUNIT</scope>
</reference>
<reference key="23">
    <citation type="journal article" date="2016" name="Nat. Struct. Mol. Biol.">
        <title>An atomic structure of the human 26S proteasome.</title>
        <authorList>
            <person name="Huang X."/>
            <person name="Luan B."/>
            <person name="Wu J."/>
            <person name="Shi Y."/>
        </authorList>
    </citation>
    <scope>STRUCTURE BY ELECTRON MICROSCOPY (3.50 ANGSTROMS)</scope>
    <scope>SUBUNIT</scope>
</reference>
<reference key="24">
    <citation type="journal article" date="2016" name="Proc. Natl. Acad. Sci. U.S.A.">
        <title>Structure of the human 26S proteasome at a resolution of 3.9 Aa.</title>
        <authorList>
            <person name="Schweitzer A."/>
            <person name="Aufderheide A."/>
            <person name="Rudack T."/>
            <person name="Beck F."/>
            <person name="Pfeifer G."/>
            <person name="Plitzko J.M."/>
            <person name="Sakata E."/>
            <person name="Schulten K."/>
            <person name="Foerster F."/>
            <person name="Baumeister W."/>
        </authorList>
    </citation>
    <scope>STRUCTURE BY ELECTRON MICROSCOPY (4.02 ANGSTROMS)</scope>
    <scope>SUBUNIT</scope>
</reference>
<reference key="25">
    <citation type="journal article" date="2016" name="Science">
        <title>The inhibition mechanism of human 20S proteasomes enables next-generation inhibitor design.</title>
        <authorList>
            <person name="Schrader J."/>
            <person name="Henneberg F."/>
            <person name="Mata R.A."/>
            <person name="Tittmann K."/>
            <person name="Schneider T.R."/>
            <person name="Stark H."/>
            <person name="Bourenkov G."/>
            <person name="Chari A."/>
        </authorList>
    </citation>
    <scope>X-RAY CRYSTALLOGRAPHY (1.80 ANGSTROMS)</scope>
    <scope>SUBUNIT</scope>
</reference>
<reference key="26">
    <citation type="journal article" date="2021" name="Nature">
        <title>AKIRIN2 controls the nuclear import of proteasomes in vertebrates.</title>
        <authorList>
            <person name="de Almeida M."/>
            <person name="Hinterndorfer M."/>
            <person name="Brunner H."/>
            <person name="Grishkovskaya I."/>
            <person name="Singh K."/>
            <person name="Schleiffer A."/>
            <person name="Jude J."/>
            <person name="Deswal S."/>
            <person name="Kalis R."/>
            <person name="Vunjak M."/>
            <person name="Lendl T."/>
            <person name="Imre R."/>
            <person name="Roitinger E."/>
            <person name="Neumann T."/>
            <person name="Kandolf S."/>
            <person name="Schutzbier M."/>
            <person name="Mechtler K."/>
            <person name="Versteeg G.A."/>
            <person name="Haselbach D."/>
            <person name="Zuber J."/>
        </authorList>
    </citation>
    <scope>STRUCTURE BY ELECTRON MICROSCOPY (2.80 ANGSTROMS) IN COMPLEX WITH AKIRIN2</scope>
    <scope>SUBUNIT</scope>
    <scope>SUBCELLULAR LOCATION</scope>
</reference>
<comment type="function">
    <text evidence="6 9 14">Component of the 20S core proteasome complex involved in the proteolytic degradation of most intracellular proteins. This complex plays numerous essential roles within the cell by associating with different regulatory particles. Associated with two 19S regulatory particles, forms the 26S proteasome and thus participates in the ATP-dependent degradation of ubiquitinated proteins. The 26S proteasome plays a key role in the maintenance of protein homeostasis by removing misfolded or damaged proteins that could impair cellular functions, and by removing proteins whose functions are no longer required. Associated with the PA200 or PA28, the 20S proteasome mediates ubiquitin-independent protein degradation. This type of proteolysis is required in several pathways including spermatogenesis (20S-PA200 complex) or generation of a subset of MHC class I-presented antigenic peptides (20S-PA28 complex).</text>
</comment>
<comment type="subunit">
    <text evidence="7 8 10 11 12 13">The 26S proteasome consists of a 20S proteasome core and two 19S regulatory subunits. The 20S proteasome core is a barrel-shaped complex made of 28 subunits that are arranged in four stacked rings. The two outer rings are each formed by seven alpha subunits, and the two inner rings are formed by seven beta subunits. The proteolytic activity is exerted by three beta-subunits PSMB5, PSMB6 and PSMB7.</text>
</comment>
<comment type="subunit">
    <text evidence="15">(Microbial infection) Interaction with HTLV-1 TAX protein favors NFKB1 activation.</text>
</comment>
<comment type="interaction">
    <interactant intactId="EBI-359310">
        <id>P25789</id>
    </interactant>
    <interactant intactId="EBI-930964">
        <id>P54253</id>
        <label>ATXN1</label>
    </interactant>
    <organismsDiffer>false</organismsDiffer>
    <experiments>7</experiments>
</comment>
<comment type="interaction">
    <interactant intactId="EBI-359310">
        <id>P25789</id>
    </interactant>
    <interactant intactId="EBI-11530605">
        <id>Q9H257-2</id>
        <label>CARD9</label>
    </interactant>
    <organismsDiffer>false</organismsDiffer>
    <experiments>3</experiments>
</comment>
<comment type="interaction">
    <interactant intactId="EBI-359310">
        <id>P25789</id>
    </interactant>
    <interactant intactId="EBI-618309">
        <id>Q08379</id>
        <label>GOLGA2</label>
    </interactant>
    <organismsDiffer>false</organismsDiffer>
    <experiments>3</experiments>
</comment>
<comment type="interaction">
    <interactant intactId="EBI-359310">
        <id>P25789</id>
    </interactant>
    <interactant intactId="EBI-447269">
        <id>Q16665</id>
        <label>HIF1A</label>
    </interactant>
    <organismsDiffer>false</organismsDiffer>
    <experiments>4</experiments>
</comment>
<comment type="interaction">
    <interactant intactId="EBI-359310">
        <id>P25789</id>
    </interactant>
    <interactant intactId="EBI-466029">
        <id>P42858</id>
        <label>HTT</label>
    </interactant>
    <organismsDiffer>false</organismsDiffer>
    <experiments>4</experiments>
</comment>
<comment type="interaction">
    <interactant intactId="EBI-359310">
        <id>P25789</id>
    </interactant>
    <interactant intactId="EBI-745305">
        <id>Q13422</id>
        <label>IKZF1</label>
    </interactant>
    <organismsDiffer>false</organismsDiffer>
    <experiments>3</experiments>
</comment>
<comment type="interaction">
    <interactant intactId="EBI-359310">
        <id>P25789</id>
    </interactant>
    <interactant intactId="EBI-11522367">
        <id>Q13422-7</id>
        <label>IKZF1</label>
    </interactant>
    <organismsDiffer>false</organismsDiffer>
    <experiments>3</experiments>
</comment>
<comment type="interaction">
    <interactant intactId="EBI-359310">
        <id>P25789</id>
    </interactant>
    <interactant intactId="EBI-359352">
        <id>P25786</id>
        <label>PSMA1</label>
    </interactant>
    <organismsDiffer>false</organismsDiffer>
    <experiments>14</experiments>
</comment>
<comment type="interaction">
    <interactant intactId="EBI-359310">
        <id>P25789</id>
    </interactant>
    <interactant intactId="EBI-603262">
        <id>P25787</id>
        <label>PSMA2</label>
    </interactant>
    <organismsDiffer>false</organismsDiffer>
    <experiments>12</experiments>
</comment>
<comment type="interaction">
    <interactant intactId="EBI-359310">
        <id>P25789</id>
    </interactant>
    <interactant intactId="EBI-348380">
        <id>P25788</id>
        <label>PSMA3</label>
    </interactant>
    <organismsDiffer>false</organismsDiffer>
    <experiments>4</experiments>
</comment>
<comment type="interaction">
    <interactant intactId="EBI-359310">
        <id>P25789</id>
    </interactant>
    <interactant intactId="EBI-355475">
        <id>P28066</id>
        <label>PSMA5</label>
    </interactant>
    <organismsDiffer>false</organismsDiffer>
    <experiments>5</experiments>
</comment>
<comment type="interaction">
    <interactant intactId="EBI-359310">
        <id>P25789</id>
    </interactant>
    <interactant intactId="EBI-357793">
        <id>P60900</id>
        <label>PSMA6</label>
    </interactant>
    <organismsDiffer>false</organismsDiffer>
    <experiments>5</experiments>
</comment>
<comment type="interaction">
    <interactant intactId="EBI-359310">
        <id>P25789</id>
    </interactant>
    <interactant intactId="EBI-603272">
        <id>O14818</id>
        <label>PSMA7</label>
    </interactant>
    <organismsDiffer>false</organismsDiffer>
    <experiments>12</experiments>
</comment>
<comment type="interaction">
    <interactant intactId="EBI-359310">
        <id>P25789</id>
    </interactant>
    <interactant intactId="EBI-10829018">
        <id>Q04864-2</id>
        <label>REL</label>
    </interactant>
    <organismsDiffer>false</organismsDiffer>
    <experiments>3</experiments>
</comment>
<comment type="interaction">
    <interactant intactId="EBI-359310">
        <id>P25789</id>
    </interactant>
    <interactant intactId="EBI-1105213">
        <id>Q9UBB9</id>
        <label>TFIP11</label>
    </interactant>
    <organismsDiffer>false</organismsDiffer>
    <experiments>3</experiments>
</comment>
<comment type="interaction">
    <interactant intactId="EBI-359310">
        <id>P25789</id>
    </interactant>
    <interactant intactId="EBI-2130415">
        <id>O00635</id>
        <label>TRIM38</label>
    </interactant>
    <organismsDiffer>false</organismsDiffer>
    <experiments>3</experiments>
</comment>
<comment type="interaction">
    <interactant intactId="EBI-359310">
        <id>P25789</id>
    </interactant>
    <interactant intactId="EBI-6143801">
        <id>Q99PV5</id>
        <label>Bhlhe41</label>
    </interactant>
    <organismsDiffer>true</organismsDiffer>
    <experiments>2</experiments>
</comment>
<comment type="subcellular location">
    <subcellularLocation>
        <location evidence="5 13">Cytoplasm</location>
    </subcellularLocation>
    <subcellularLocation>
        <location evidence="5 13">Nucleus</location>
    </subcellularLocation>
    <text evidence="1 13">Translocated from the cytoplasm into the nucleus following interaction with AKIRIN2, which bridges the proteasome with the nuclear import receptor IPO9 (PubMed:34711951). Colocalizes with TRIM5 in the cytoplasmic bodies (By similarity).</text>
</comment>
<comment type="alternative products">
    <event type="alternative splicing"/>
    <isoform>
        <id>P25789-1</id>
        <name>1</name>
        <sequence type="displayed"/>
    </isoform>
    <isoform>
        <id>P25789-2</id>
        <name>2</name>
        <sequence type="described" ref="VSP_043102"/>
    </isoform>
</comment>
<comment type="induction">
    <text evidence="4">Down-regulated by antioxidants BO-653 and probucol.</text>
</comment>
<comment type="similarity">
    <text evidence="2">Belongs to the peptidase T1A family.</text>
</comment>
<dbReference type="EMBL" id="D00763">
    <property type="protein sequence ID" value="BAA00660.1"/>
    <property type="molecule type" value="mRNA"/>
</dbReference>
<dbReference type="EMBL" id="BT009784">
    <property type="protein sequence ID" value="AAP88786.1"/>
    <property type="molecule type" value="mRNA"/>
</dbReference>
<dbReference type="EMBL" id="AC027228">
    <property type="status" value="NOT_ANNOTATED_CDS"/>
    <property type="molecule type" value="Genomic_DNA"/>
</dbReference>
<dbReference type="EMBL" id="CH471136">
    <property type="protein sequence ID" value="EAW99163.1"/>
    <property type="molecule type" value="Genomic_DNA"/>
</dbReference>
<dbReference type="EMBL" id="CH471136">
    <property type="protein sequence ID" value="EAW99164.1"/>
    <property type="molecule type" value="Genomic_DNA"/>
</dbReference>
<dbReference type="EMBL" id="BC005361">
    <property type="protein sequence ID" value="AAH05361.1"/>
    <property type="molecule type" value="mRNA"/>
</dbReference>
<dbReference type="EMBL" id="BC022445">
    <property type="protein sequence ID" value="AAH22445.1"/>
    <property type="molecule type" value="mRNA"/>
</dbReference>
<dbReference type="EMBL" id="BC022817">
    <property type="protein sequence ID" value="AAH22817.2"/>
    <property type="molecule type" value="mRNA"/>
</dbReference>
<dbReference type="EMBL" id="BC047667">
    <property type="protein sequence ID" value="AAH47667.1"/>
    <property type="molecule type" value="mRNA"/>
</dbReference>
<dbReference type="EMBL" id="BC093069">
    <property type="protein sequence ID" value="AAH93069.1"/>
    <property type="molecule type" value="mRNA"/>
</dbReference>
<dbReference type="CCDS" id="CCDS10303.1">
    <molecule id="P25789-1"/>
</dbReference>
<dbReference type="CCDS" id="CCDS45319.1">
    <molecule id="P25789-2"/>
</dbReference>
<dbReference type="PIR" id="S15972">
    <property type="entry name" value="SNHUC9"/>
</dbReference>
<dbReference type="RefSeq" id="NP_001096137.1">
    <molecule id="P25789-1"/>
    <property type="nucleotide sequence ID" value="NM_001102667.2"/>
</dbReference>
<dbReference type="RefSeq" id="NP_001096138.1">
    <molecule id="P25789-2"/>
    <property type="nucleotide sequence ID" value="NM_001102668.3"/>
</dbReference>
<dbReference type="RefSeq" id="NP_001317605.1">
    <molecule id="P25789-1"/>
    <property type="nucleotide sequence ID" value="NM_001330676.2"/>
</dbReference>
<dbReference type="RefSeq" id="NP_002780.1">
    <molecule id="P25789-1"/>
    <property type="nucleotide sequence ID" value="NM_002789.6"/>
</dbReference>
<dbReference type="PDB" id="4R3O">
    <property type="method" value="X-ray"/>
    <property type="resolution" value="2.60 A"/>
    <property type="chains" value="C/Q=2-251"/>
</dbReference>
<dbReference type="PDB" id="4R67">
    <property type="method" value="X-ray"/>
    <property type="resolution" value="2.89 A"/>
    <property type="chains" value="C/Q/e/s=2-251"/>
</dbReference>
<dbReference type="PDB" id="5A0Q">
    <property type="method" value="EM"/>
    <property type="resolution" value="3.50 A"/>
    <property type="chains" value="C/Q=1-261"/>
</dbReference>
<dbReference type="PDB" id="5GJQ">
    <property type="method" value="EM"/>
    <property type="resolution" value="4.50 A"/>
    <property type="chains" value="D/j=1-261"/>
</dbReference>
<dbReference type="PDB" id="5GJR">
    <property type="method" value="EM"/>
    <property type="resolution" value="3.50 A"/>
    <property type="chains" value="D/j=1-261"/>
</dbReference>
<dbReference type="PDB" id="5L4G">
    <property type="method" value="EM"/>
    <property type="resolution" value="4.02 A"/>
    <property type="chains" value="C/P=1-261"/>
</dbReference>
<dbReference type="PDB" id="5LE5">
    <property type="method" value="X-ray"/>
    <property type="resolution" value="1.80 A"/>
    <property type="chains" value="B/P=1-261"/>
</dbReference>
<dbReference type="PDB" id="5LEX">
    <property type="method" value="X-ray"/>
    <property type="resolution" value="2.20 A"/>
    <property type="chains" value="B/P=1-261"/>
</dbReference>
<dbReference type="PDB" id="5LEY">
    <property type="method" value="X-ray"/>
    <property type="resolution" value="1.90 A"/>
    <property type="chains" value="B/P=1-261"/>
</dbReference>
<dbReference type="PDB" id="5LEZ">
    <property type="method" value="X-ray"/>
    <property type="resolution" value="2.19 A"/>
    <property type="chains" value="B/P=1-261"/>
</dbReference>
<dbReference type="PDB" id="5LF0">
    <property type="method" value="X-ray"/>
    <property type="resolution" value="2.41 A"/>
    <property type="chains" value="B/P=1-261"/>
</dbReference>
<dbReference type="PDB" id="5LF1">
    <property type="method" value="X-ray"/>
    <property type="resolution" value="2.00 A"/>
    <property type="chains" value="B/P=1-261"/>
</dbReference>
<dbReference type="PDB" id="5LF3">
    <property type="method" value="X-ray"/>
    <property type="resolution" value="2.10 A"/>
    <property type="chains" value="B/P=1-261"/>
</dbReference>
<dbReference type="PDB" id="5LF4">
    <property type="method" value="X-ray"/>
    <property type="resolution" value="1.99 A"/>
    <property type="chains" value="B/P=1-261"/>
</dbReference>
<dbReference type="PDB" id="5LF6">
    <property type="method" value="X-ray"/>
    <property type="resolution" value="2.07 A"/>
    <property type="chains" value="B/P=1-261"/>
</dbReference>
<dbReference type="PDB" id="5LF7">
    <property type="method" value="X-ray"/>
    <property type="resolution" value="2.00 A"/>
    <property type="chains" value="B/P=1-261"/>
</dbReference>
<dbReference type="PDB" id="5LN3">
    <property type="method" value="EM"/>
    <property type="resolution" value="6.80 A"/>
    <property type="chains" value="C=1-261"/>
</dbReference>
<dbReference type="PDB" id="5M32">
    <property type="method" value="EM"/>
    <property type="resolution" value="3.80 A"/>
    <property type="chains" value="B/P=1-261"/>
</dbReference>
<dbReference type="PDB" id="5T0C">
    <property type="method" value="EM"/>
    <property type="resolution" value="3.80 A"/>
    <property type="chains" value="AI/BI=2-261"/>
</dbReference>
<dbReference type="PDB" id="5T0G">
    <property type="method" value="EM"/>
    <property type="resolution" value="4.40 A"/>
    <property type="chains" value="I=2-261"/>
</dbReference>
<dbReference type="PDB" id="5T0H">
    <property type="method" value="EM"/>
    <property type="resolution" value="6.80 A"/>
    <property type="chains" value="I=2-261"/>
</dbReference>
<dbReference type="PDB" id="5T0I">
    <property type="method" value="EM"/>
    <property type="resolution" value="8.00 A"/>
    <property type="chains" value="I=2-261"/>
</dbReference>
<dbReference type="PDB" id="5T0J">
    <property type="method" value="EM"/>
    <property type="resolution" value="8.00 A"/>
    <property type="chains" value="I=2-261"/>
</dbReference>
<dbReference type="PDB" id="5VFO">
    <property type="method" value="EM"/>
    <property type="resolution" value="3.50 A"/>
    <property type="chains" value="I/i=2-251"/>
</dbReference>
<dbReference type="PDB" id="5VFP">
    <property type="method" value="EM"/>
    <property type="resolution" value="4.20 A"/>
    <property type="chains" value="I/i=2-251"/>
</dbReference>
<dbReference type="PDB" id="5VFQ">
    <property type="method" value="EM"/>
    <property type="resolution" value="4.20 A"/>
    <property type="chains" value="I/i=2-251"/>
</dbReference>
<dbReference type="PDB" id="5VFR">
    <property type="method" value="EM"/>
    <property type="resolution" value="4.90 A"/>
    <property type="chains" value="I/i=2-251"/>
</dbReference>
<dbReference type="PDB" id="5VFS">
    <property type="method" value="EM"/>
    <property type="resolution" value="3.60 A"/>
    <property type="chains" value="I/i=2-251"/>
</dbReference>
<dbReference type="PDB" id="5VFT">
    <property type="method" value="EM"/>
    <property type="resolution" value="7.00 A"/>
    <property type="chains" value="I/i=2-251"/>
</dbReference>
<dbReference type="PDB" id="5VFU">
    <property type="method" value="EM"/>
    <property type="resolution" value="5.80 A"/>
    <property type="chains" value="I/i=2-251"/>
</dbReference>
<dbReference type="PDB" id="6AVO">
    <property type="method" value="EM"/>
    <property type="resolution" value="3.80 A"/>
    <property type="chains" value="O/Z=1-261"/>
</dbReference>
<dbReference type="PDB" id="6E5B">
    <property type="method" value="X-ray"/>
    <property type="resolution" value="2.77 A"/>
    <property type="chains" value="B/P=1-261"/>
</dbReference>
<dbReference type="PDB" id="6KWY">
    <property type="method" value="EM"/>
    <property type="resolution" value="2.72 A"/>
    <property type="chains" value="B/P=1-261"/>
</dbReference>
<dbReference type="PDB" id="6MSB">
    <property type="method" value="EM"/>
    <property type="resolution" value="3.00 A"/>
    <property type="chains" value="I/i=2-261"/>
</dbReference>
<dbReference type="PDB" id="6MSD">
    <property type="method" value="EM"/>
    <property type="resolution" value="3.20 A"/>
    <property type="chains" value="I/i=2-261"/>
</dbReference>
<dbReference type="PDB" id="6MSE">
    <property type="method" value="EM"/>
    <property type="resolution" value="3.30 A"/>
    <property type="chains" value="I/i=2-261"/>
</dbReference>
<dbReference type="PDB" id="6MSG">
    <property type="method" value="EM"/>
    <property type="resolution" value="3.50 A"/>
    <property type="chains" value="I/i=2-261"/>
</dbReference>
<dbReference type="PDB" id="6MSH">
    <property type="method" value="EM"/>
    <property type="resolution" value="3.60 A"/>
    <property type="chains" value="I/i=2-261"/>
</dbReference>
<dbReference type="PDB" id="6MSJ">
    <property type="method" value="EM"/>
    <property type="resolution" value="3.30 A"/>
    <property type="chains" value="I/i=2-261"/>
</dbReference>
<dbReference type="PDB" id="6MSK">
    <property type="method" value="EM"/>
    <property type="resolution" value="3.20 A"/>
    <property type="chains" value="I/i=2-261"/>
</dbReference>
<dbReference type="PDB" id="6R70">
    <property type="method" value="EM"/>
    <property type="resolution" value="3.50 A"/>
    <property type="chains" value="B/P=2-249"/>
</dbReference>
<dbReference type="PDB" id="6REY">
    <property type="method" value="EM"/>
    <property type="resolution" value="3.00 A"/>
    <property type="chains" value="C/Q=1-261"/>
</dbReference>
<dbReference type="PDB" id="6RGQ">
    <property type="method" value="EM"/>
    <property type="resolution" value="2.60 A"/>
    <property type="chains" value="C/Q=1-261"/>
</dbReference>
<dbReference type="PDB" id="6WJD">
    <property type="method" value="EM"/>
    <property type="resolution" value="4.80 A"/>
    <property type="chains" value="I/i=2-261"/>
</dbReference>
<dbReference type="PDB" id="6WJN">
    <property type="method" value="EM"/>
    <property type="resolution" value="5.70 A"/>
    <property type="chains" value="I/i=2-251"/>
</dbReference>
<dbReference type="PDB" id="6XMJ">
    <property type="method" value="EM"/>
    <property type="resolution" value="3.00 A"/>
    <property type="chains" value="C=2-251"/>
</dbReference>
<dbReference type="PDB" id="7AWE">
    <property type="method" value="X-ray"/>
    <property type="resolution" value="2.29 A"/>
    <property type="chains" value="C/Q=2-257"/>
</dbReference>
<dbReference type="PDB" id="7B12">
    <property type="method" value="X-ray"/>
    <property type="resolution" value="2.43 A"/>
    <property type="chains" value="C/Q=2-249"/>
</dbReference>
<dbReference type="PDB" id="7LXV">
    <property type="method" value="EM"/>
    <property type="resolution" value="3.40 A"/>
    <property type="chains" value="B/P=1-261"/>
</dbReference>
<dbReference type="PDB" id="7NAN">
    <property type="method" value="EM"/>
    <property type="resolution" value="2.80 A"/>
    <property type="chains" value="B/P=1-261"/>
</dbReference>
<dbReference type="PDB" id="7NAO">
    <property type="method" value="EM"/>
    <property type="resolution" value="2.90 A"/>
    <property type="chains" value="B/P=1-261"/>
</dbReference>
<dbReference type="PDB" id="7NAP">
    <property type="method" value="EM"/>
    <property type="resolution" value="3.20 A"/>
    <property type="chains" value="B/P=1-261"/>
</dbReference>
<dbReference type="PDB" id="7NAQ">
    <property type="method" value="EM"/>
    <property type="resolution" value="3.20 A"/>
    <property type="chains" value="B/P=1-261"/>
</dbReference>
<dbReference type="PDB" id="7NHT">
    <property type="method" value="EM"/>
    <property type="resolution" value="2.80 A"/>
    <property type="chains" value="B=1-261"/>
</dbReference>
<dbReference type="PDB" id="7PG9">
    <property type="method" value="EM"/>
    <property type="resolution" value="3.70 A"/>
    <property type="chains" value="C/Q=1-261"/>
</dbReference>
<dbReference type="PDB" id="7QXN">
    <property type="method" value="EM"/>
    <property type="resolution" value="3.70 A"/>
    <property type="chains" value="I/i=2-261"/>
</dbReference>
<dbReference type="PDB" id="7QXP">
    <property type="method" value="EM"/>
    <property type="resolution" value="3.60 A"/>
    <property type="chains" value="I/i=2-261"/>
</dbReference>
<dbReference type="PDB" id="7QXU">
    <property type="method" value="EM"/>
    <property type="resolution" value="4.30 A"/>
    <property type="chains" value="I/i=2-261"/>
</dbReference>
<dbReference type="PDB" id="7QXW">
    <property type="method" value="EM"/>
    <property type="resolution" value="4.10 A"/>
    <property type="chains" value="I/i=2-261"/>
</dbReference>
<dbReference type="PDB" id="7QXX">
    <property type="method" value="EM"/>
    <property type="resolution" value="4.40 A"/>
    <property type="chains" value="I/i=2-261"/>
</dbReference>
<dbReference type="PDB" id="7QY7">
    <property type="method" value="EM"/>
    <property type="resolution" value="4.70 A"/>
    <property type="chains" value="I/i=2-261"/>
</dbReference>
<dbReference type="PDB" id="7QYA">
    <property type="method" value="EM"/>
    <property type="resolution" value="4.80 A"/>
    <property type="chains" value="I/i=2-261"/>
</dbReference>
<dbReference type="PDB" id="7QYB">
    <property type="method" value="EM"/>
    <property type="resolution" value="4.10 A"/>
    <property type="chains" value="I/i=2-261"/>
</dbReference>
<dbReference type="PDB" id="7V5G">
    <property type="method" value="EM"/>
    <property type="resolution" value="4.47 A"/>
    <property type="chains" value="Q/X=1-261"/>
</dbReference>
<dbReference type="PDB" id="7V5M">
    <property type="method" value="EM"/>
    <property type="resolution" value="3.88 A"/>
    <property type="chains" value="C/Q=1-261"/>
</dbReference>
<dbReference type="PDB" id="7W37">
    <property type="method" value="EM"/>
    <property type="resolution" value="3.00 A"/>
    <property type="chains" value="I/i=1-261"/>
</dbReference>
<dbReference type="PDB" id="7W38">
    <property type="method" value="EM"/>
    <property type="resolution" value="3.10 A"/>
    <property type="chains" value="I/i=1-261"/>
</dbReference>
<dbReference type="PDB" id="7W39">
    <property type="method" value="EM"/>
    <property type="resolution" value="3.20 A"/>
    <property type="chains" value="I/i=1-261"/>
</dbReference>
<dbReference type="PDB" id="7W3A">
    <property type="method" value="EM"/>
    <property type="resolution" value="3.50 A"/>
    <property type="chains" value="I/i=1-261"/>
</dbReference>
<dbReference type="PDB" id="7W3B">
    <property type="method" value="EM"/>
    <property type="resolution" value="3.60 A"/>
    <property type="chains" value="I/i=1-261"/>
</dbReference>
<dbReference type="PDB" id="7W3C">
    <property type="method" value="EM"/>
    <property type="resolution" value="3.40 A"/>
    <property type="chains" value="I/i=1-261"/>
</dbReference>
<dbReference type="PDB" id="7W3F">
    <property type="method" value="EM"/>
    <property type="resolution" value="3.30 A"/>
    <property type="chains" value="I/i=1-261"/>
</dbReference>
<dbReference type="PDB" id="7W3G">
    <property type="method" value="EM"/>
    <property type="resolution" value="3.20 A"/>
    <property type="chains" value="I/i=1-261"/>
</dbReference>
<dbReference type="PDB" id="7W3H">
    <property type="method" value="EM"/>
    <property type="resolution" value="3.20 A"/>
    <property type="chains" value="I/i=1-261"/>
</dbReference>
<dbReference type="PDB" id="7W3I">
    <property type="method" value="EM"/>
    <property type="resolution" value="3.50 A"/>
    <property type="chains" value="I/i=1-261"/>
</dbReference>
<dbReference type="PDB" id="7W3J">
    <property type="method" value="EM"/>
    <property type="resolution" value="3.50 A"/>
    <property type="chains" value="I/i=1-261"/>
</dbReference>
<dbReference type="PDB" id="7W3K">
    <property type="method" value="EM"/>
    <property type="resolution" value="3.60 A"/>
    <property type="chains" value="I/i=1-261"/>
</dbReference>
<dbReference type="PDB" id="7W3M">
    <property type="method" value="EM"/>
    <property type="resolution" value="3.50 A"/>
    <property type="chains" value="I/i=1-261"/>
</dbReference>
<dbReference type="PDB" id="8BZL">
    <property type="method" value="X-ray"/>
    <property type="resolution" value="2.14 A"/>
    <property type="chains" value="B/P=1-261"/>
</dbReference>
<dbReference type="PDB" id="8CVR">
    <property type="method" value="EM"/>
    <property type="resolution" value="2.70 A"/>
    <property type="chains" value="C/Q=1-261"/>
</dbReference>
<dbReference type="PDB" id="8CVS">
    <property type="method" value="EM"/>
    <property type="resolution" value="3.10 A"/>
    <property type="chains" value="B/P=1-261"/>
</dbReference>
<dbReference type="PDB" id="8CVT">
    <property type="method" value="EM"/>
    <property type="resolution" value="3.00 A"/>
    <property type="chains" value="I/i=1-261"/>
</dbReference>
<dbReference type="PDB" id="8CXB">
    <property type="method" value="EM"/>
    <property type="resolution" value="2.90 A"/>
    <property type="chains" value="B/P=1-261"/>
</dbReference>
<dbReference type="PDB" id="8JRI">
    <property type="method" value="EM"/>
    <property type="resolution" value="3.40 A"/>
    <property type="chains" value="I=1-261"/>
</dbReference>
<dbReference type="PDB" id="8JRT">
    <property type="method" value="EM"/>
    <property type="resolution" value="3.60 A"/>
    <property type="chains" value="I=1-261"/>
</dbReference>
<dbReference type="PDB" id="8JTI">
    <property type="method" value="EM"/>
    <property type="resolution" value="3.80 A"/>
    <property type="chains" value="I=1-261"/>
</dbReference>
<dbReference type="PDB" id="8K0G">
    <property type="method" value="EM"/>
    <property type="resolution" value="3.80 A"/>
    <property type="chains" value="I=1-261"/>
</dbReference>
<dbReference type="PDB" id="8QYJ">
    <property type="method" value="EM"/>
    <property type="resolution" value="2.73 A"/>
    <property type="chains" value="B=1-261"/>
</dbReference>
<dbReference type="PDB" id="8QYL">
    <property type="method" value="EM"/>
    <property type="resolution" value="2.67 A"/>
    <property type="chains" value="B=1-261"/>
</dbReference>
<dbReference type="PDB" id="8QYM">
    <property type="method" value="EM"/>
    <property type="resolution" value="2.73 A"/>
    <property type="chains" value="B=1-261"/>
</dbReference>
<dbReference type="PDB" id="8QYN">
    <property type="method" value="EM"/>
    <property type="resolution" value="2.88 A"/>
    <property type="chains" value="B=1-261"/>
</dbReference>
<dbReference type="PDB" id="8QYO">
    <property type="method" value="EM"/>
    <property type="resolution" value="2.84 A"/>
    <property type="chains" value="B/P=1-261"/>
</dbReference>
<dbReference type="PDB" id="8QYS">
    <property type="method" value="EM"/>
    <property type="resolution" value="3.89 A"/>
    <property type="chains" value="B/S=3-250"/>
</dbReference>
<dbReference type="PDB" id="8QZ9">
    <property type="method" value="EM"/>
    <property type="resolution" value="2.95 A"/>
    <property type="chains" value="B=1-261"/>
</dbReference>
<dbReference type="PDB" id="8TM3">
    <property type="method" value="EM"/>
    <property type="resolution" value="3.00 A"/>
    <property type="chains" value="B=1-261"/>
</dbReference>
<dbReference type="PDB" id="8TM4">
    <property type="method" value="EM"/>
    <property type="resolution" value="3.00 A"/>
    <property type="chains" value="B=1-261"/>
</dbReference>
<dbReference type="PDB" id="8TM5">
    <property type="method" value="EM"/>
    <property type="resolution" value="3.00 A"/>
    <property type="chains" value="B=1-261"/>
</dbReference>
<dbReference type="PDB" id="8TM6">
    <property type="method" value="EM"/>
    <property type="resolution" value="2.80 A"/>
    <property type="chains" value="B/P=1-261"/>
</dbReference>
<dbReference type="PDB" id="8UD9">
    <property type="method" value="EM"/>
    <property type="resolution" value="2.04 A"/>
    <property type="chains" value="C/Q=1-261"/>
</dbReference>
<dbReference type="PDB" id="8USB">
    <property type="method" value="EM"/>
    <property type="resolution" value="2.73 A"/>
    <property type="chains" value="I=1-261"/>
</dbReference>
<dbReference type="PDB" id="8USC">
    <property type="method" value="EM"/>
    <property type="resolution" value="3.10 A"/>
    <property type="chains" value="I=1-261"/>
</dbReference>
<dbReference type="PDB" id="8YIX">
    <property type="method" value="EM"/>
    <property type="resolution" value="2.91 A"/>
    <property type="chains" value="B=1-261"/>
</dbReference>
<dbReference type="PDB" id="8YIY">
    <property type="method" value="EM"/>
    <property type="resolution" value="3.41 A"/>
    <property type="chains" value="B/P=1-261"/>
</dbReference>
<dbReference type="PDB" id="8YIZ">
    <property type="method" value="EM"/>
    <property type="resolution" value="3.79 A"/>
    <property type="chains" value="B/P=1-261"/>
</dbReference>
<dbReference type="PDB" id="9E8G">
    <property type="method" value="EM"/>
    <property type="resolution" value="3.01 A"/>
    <property type="chains" value="I=1-261"/>
</dbReference>
<dbReference type="PDB" id="9E8H">
    <property type="method" value="EM"/>
    <property type="resolution" value="2.90 A"/>
    <property type="chains" value="I=1-261"/>
</dbReference>
<dbReference type="PDB" id="9E8I">
    <property type="method" value="EM"/>
    <property type="resolution" value="2.87 A"/>
    <property type="chains" value="I=1-261"/>
</dbReference>
<dbReference type="PDB" id="9E8J">
    <property type="method" value="EM"/>
    <property type="resolution" value="3.47 A"/>
    <property type="chains" value="I=1-261"/>
</dbReference>
<dbReference type="PDB" id="9E8K">
    <property type="method" value="EM"/>
    <property type="resolution" value="4.08 A"/>
    <property type="chains" value="I=1-261"/>
</dbReference>
<dbReference type="PDB" id="9E8L">
    <property type="method" value="EM"/>
    <property type="resolution" value="3.59 A"/>
    <property type="chains" value="I=1-261"/>
</dbReference>
<dbReference type="PDB" id="9E8N">
    <property type="method" value="EM"/>
    <property type="resolution" value="3.62 A"/>
    <property type="chains" value="I=1-261"/>
</dbReference>
<dbReference type="PDB" id="9E8O">
    <property type="method" value="EM"/>
    <property type="resolution" value="3.10 A"/>
    <property type="chains" value="I=1-261"/>
</dbReference>
<dbReference type="PDB" id="9E8Q">
    <property type="method" value="EM"/>
    <property type="resolution" value="3.16 A"/>
    <property type="chains" value="I=1-261"/>
</dbReference>
<dbReference type="PDB" id="9HMN">
    <property type="method" value="EM"/>
    <property type="resolution" value="2.55 A"/>
    <property type="chains" value="C/Q=1-261"/>
</dbReference>
<dbReference type="PDBsum" id="4R3O"/>
<dbReference type="PDBsum" id="4R67"/>
<dbReference type="PDBsum" id="5A0Q"/>
<dbReference type="PDBsum" id="5GJQ"/>
<dbReference type="PDBsum" id="5GJR"/>
<dbReference type="PDBsum" id="5L4G"/>
<dbReference type="PDBsum" id="5LE5"/>
<dbReference type="PDBsum" id="5LEX"/>
<dbReference type="PDBsum" id="5LEY"/>
<dbReference type="PDBsum" id="5LEZ"/>
<dbReference type="PDBsum" id="5LF0"/>
<dbReference type="PDBsum" id="5LF1"/>
<dbReference type="PDBsum" id="5LF3"/>
<dbReference type="PDBsum" id="5LF4"/>
<dbReference type="PDBsum" id="5LF6"/>
<dbReference type="PDBsum" id="5LF7"/>
<dbReference type="PDBsum" id="5LN3"/>
<dbReference type="PDBsum" id="5M32"/>
<dbReference type="PDBsum" id="5T0C"/>
<dbReference type="PDBsum" id="5T0G"/>
<dbReference type="PDBsum" id="5T0H"/>
<dbReference type="PDBsum" id="5T0I"/>
<dbReference type="PDBsum" id="5T0J"/>
<dbReference type="PDBsum" id="5VFO"/>
<dbReference type="PDBsum" id="5VFP"/>
<dbReference type="PDBsum" id="5VFQ"/>
<dbReference type="PDBsum" id="5VFR"/>
<dbReference type="PDBsum" id="5VFS"/>
<dbReference type="PDBsum" id="5VFT"/>
<dbReference type="PDBsum" id="5VFU"/>
<dbReference type="PDBsum" id="6AVO"/>
<dbReference type="PDBsum" id="6E5B"/>
<dbReference type="PDBsum" id="6KWY"/>
<dbReference type="PDBsum" id="6MSB"/>
<dbReference type="PDBsum" id="6MSD"/>
<dbReference type="PDBsum" id="6MSE"/>
<dbReference type="PDBsum" id="6MSG"/>
<dbReference type="PDBsum" id="6MSH"/>
<dbReference type="PDBsum" id="6MSJ"/>
<dbReference type="PDBsum" id="6MSK"/>
<dbReference type="PDBsum" id="6R70"/>
<dbReference type="PDBsum" id="6REY"/>
<dbReference type="PDBsum" id="6RGQ"/>
<dbReference type="PDBsum" id="6WJD"/>
<dbReference type="PDBsum" id="6WJN"/>
<dbReference type="PDBsum" id="6XMJ"/>
<dbReference type="PDBsum" id="7AWE"/>
<dbReference type="PDBsum" id="7B12"/>
<dbReference type="PDBsum" id="7LXV"/>
<dbReference type="PDBsum" id="7NAN"/>
<dbReference type="PDBsum" id="7NAO"/>
<dbReference type="PDBsum" id="7NAP"/>
<dbReference type="PDBsum" id="7NAQ"/>
<dbReference type="PDBsum" id="7NHT"/>
<dbReference type="PDBsum" id="7PG9"/>
<dbReference type="PDBsum" id="7QXN"/>
<dbReference type="PDBsum" id="7QXP"/>
<dbReference type="PDBsum" id="7QXU"/>
<dbReference type="PDBsum" id="7QXW"/>
<dbReference type="PDBsum" id="7QXX"/>
<dbReference type="PDBsum" id="7QY7"/>
<dbReference type="PDBsum" id="7QYA"/>
<dbReference type="PDBsum" id="7QYB"/>
<dbReference type="PDBsum" id="7V5G"/>
<dbReference type="PDBsum" id="7V5M"/>
<dbReference type="PDBsum" id="7W37"/>
<dbReference type="PDBsum" id="7W38"/>
<dbReference type="PDBsum" id="7W39"/>
<dbReference type="PDBsum" id="7W3A"/>
<dbReference type="PDBsum" id="7W3B"/>
<dbReference type="PDBsum" id="7W3C"/>
<dbReference type="PDBsum" id="7W3F"/>
<dbReference type="PDBsum" id="7W3G"/>
<dbReference type="PDBsum" id="7W3H"/>
<dbReference type="PDBsum" id="7W3I"/>
<dbReference type="PDBsum" id="7W3J"/>
<dbReference type="PDBsum" id="7W3K"/>
<dbReference type="PDBsum" id="7W3M"/>
<dbReference type="PDBsum" id="8BZL"/>
<dbReference type="PDBsum" id="8CVR"/>
<dbReference type="PDBsum" id="8CVS"/>
<dbReference type="PDBsum" id="8CVT"/>
<dbReference type="PDBsum" id="8CXB"/>
<dbReference type="PDBsum" id="8JRI"/>
<dbReference type="PDBsum" id="8JRT"/>
<dbReference type="PDBsum" id="8JTI"/>
<dbReference type="PDBsum" id="8K0G"/>
<dbReference type="PDBsum" id="8QYJ"/>
<dbReference type="PDBsum" id="8QYL"/>
<dbReference type="PDBsum" id="8QYM"/>
<dbReference type="PDBsum" id="8QYN"/>
<dbReference type="PDBsum" id="8QYO"/>
<dbReference type="PDBsum" id="8QYS"/>
<dbReference type="PDBsum" id="8QZ9"/>
<dbReference type="PDBsum" id="8TM3"/>
<dbReference type="PDBsum" id="8TM4"/>
<dbReference type="PDBsum" id="8TM5"/>
<dbReference type="PDBsum" id="8TM6"/>
<dbReference type="PDBsum" id="8UD9"/>
<dbReference type="PDBsum" id="8USB"/>
<dbReference type="PDBsum" id="8USC"/>
<dbReference type="PDBsum" id="8YIX"/>
<dbReference type="PDBsum" id="8YIY"/>
<dbReference type="PDBsum" id="8YIZ"/>
<dbReference type="PDBsum" id="9E8G"/>
<dbReference type="PDBsum" id="9E8H"/>
<dbReference type="PDBsum" id="9E8I"/>
<dbReference type="PDBsum" id="9E8J"/>
<dbReference type="PDBsum" id="9E8K"/>
<dbReference type="PDBsum" id="9E8L"/>
<dbReference type="PDBsum" id="9E8N"/>
<dbReference type="PDBsum" id="9E8O"/>
<dbReference type="PDBsum" id="9E8Q"/>
<dbReference type="PDBsum" id="9HMN"/>
<dbReference type="EMDB" id="EMD-0781"/>
<dbReference type="EMDB" id="EMD-12341"/>
<dbReference type="EMDB" id="EMD-13389"/>
<dbReference type="EMDB" id="EMD-14201"/>
<dbReference type="EMDB" id="EMD-14202"/>
<dbReference type="EMDB" id="EMD-14203"/>
<dbReference type="EMDB" id="EMD-14204"/>
<dbReference type="EMDB" id="EMD-14205"/>
<dbReference type="EMDB" id="EMD-14209"/>
<dbReference type="EMDB" id="EMD-14210"/>
<dbReference type="EMDB" id="EMD-14211"/>
<dbReference type="EMDB" id="EMD-18755"/>
<dbReference type="EMDB" id="EMD-18757"/>
<dbReference type="EMDB" id="EMD-18758"/>
<dbReference type="EMDB" id="EMD-18759"/>
<dbReference type="EMDB" id="EMD-18760"/>
<dbReference type="EMDB" id="EMD-18761"/>
<dbReference type="EMDB" id="EMD-18773"/>
<dbReference type="EMDB" id="EMD-21691"/>
<dbReference type="EMDB" id="EMD-21696"/>
<dbReference type="EMDB" id="EMD-22259"/>
<dbReference type="EMDB" id="EMD-23576"/>
<dbReference type="EMDB" id="EMD-24275"/>
<dbReference type="EMDB" id="EMD-24276"/>
<dbReference type="EMDB" id="EMD-24277"/>
<dbReference type="EMDB" id="EMD-24278"/>
<dbReference type="EMDB" id="EMD-27013"/>
<dbReference type="EMDB" id="EMD-27015"/>
<dbReference type="EMDB" id="EMD-27018"/>
<dbReference type="EMDB" id="EMD-2981"/>
<dbReference type="EMDB" id="EMD-31724"/>
<dbReference type="EMDB" id="EMD-31727"/>
<dbReference type="EMDB" id="EMD-32272"/>
<dbReference type="EMDB" id="EMD-32273"/>
<dbReference type="EMDB" id="EMD-32274"/>
<dbReference type="EMDB" id="EMD-32275"/>
<dbReference type="EMDB" id="EMD-32276"/>
<dbReference type="EMDB" id="EMD-32277"/>
<dbReference type="EMDB" id="EMD-32278"/>
<dbReference type="EMDB" id="EMD-32279"/>
<dbReference type="EMDB" id="EMD-32280"/>
<dbReference type="EMDB" id="EMD-32281"/>
<dbReference type="EMDB" id="EMD-32282"/>
<dbReference type="EMDB" id="EMD-32283"/>
<dbReference type="EMDB" id="EMD-32284"/>
<dbReference type="EMDB" id="EMD-36598"/>
<dbReference type="EMDB" id="EMD-36605"/>
<dbReference type="EMDB" id="EMD-36645"/>
<dbReference type="EMDB" id="EMD-36764"/>
<dbReference type="EMDB" id="EMD-39332"/>
<dbReference type="EMDB" id="EMD-39333"/>
<dbReference type="EMDB" id="EMD-39334"/>
<dbReference type="EMDB" id="EMD-4089"/>
<dbReference type="EMDB" id="EMD-41377"/>
<dbReference type="EMDB" id="EMD-41378"/>
<dbReference type="EMDB" id="EMD-41379"/>
<dbReference type="EMDB" id="EMD-41380"/>
<dbReference type="EMDB" id="EMD-42148"/>
<dbReference type="EMDB" id="EMD-42506"/>
<dbReference type="EMDB" id="EMD-42507"/>
<dbReference type="EMDB" id="EMD-4738"/>
<dbReference type="EMDB" id="EMD-47719"/>
<dbReference type="EMDB" id="EMD-47720"/>
<dbReference type="EMDB" id="EMD-47721"/>
<dbReference type="EMDB" id="EMD-47722"/>
<dbReference type="EMDB" id="EMD-47723"/>
<dbReference type="EMDB" id="EMD-47724"/>
<dbReference type="EMDB" id="EMD-47725"/>
<dbReference type="EMDB" id="EMD-47726"/>
<dbReference type="EMDB" id="EMD-47727"/>
<dbReference type="EMDB" id="EMD-4860"/>
<dbReference type="EMDB" id="EMD-4877"/>
<dbReference type="EMDB" id="EMD-52296"/>
<dbReference type="EMDB" id="EMD-60138"/>
<dbReference type="EMDB" id="EMD-60139"/>
<dbReference type="EMDB" id="EMD-7010"/>
<dbReference type="EMDB" id="EMD-8662"/>
<dbReference type="EMDB" id="EMD-8663"/>
<dbReference type="EMDB" id="EMD-8664"/>
<dbReference type="EMDB" id="EMD-8665"/>
<dbReference type="EMDB" id="EMD-8666"/>
<dbReference type="EMDB" id="EMD-8667"/>
<dbReference type="EMDB" id="EMD-8668"/>
<dbReference type="EMDB" id="EMD-9216"/>
<dbReference type="EMDB" id="EMD-9217"/>
<dbReference type="EMDB" id="EMD-9218"/>
<dbReference type="EMDB" id="EMD-9219"/>
<dbReference type="EMDB" id="EMD-9220"/>
<dbReference type="EMDB" id="EMD-9221"/>
<dbReference type="EMDB" id="EMD-9222"/>
<dbReference type="EMDB" id="EMD-9512"/>
<dbReference type="SMR" id="P25789"/>
<dbReference type="BioGRID" id="111658">
    <property type="interactions" value="318"/>
</dbReference>
<dbReference type="ComplexPortal" id="CPX-5993">
    <property type="entry name" value="26S proteasome complex"/>
</dbReference>
<dbReference type="ComplexPortal" id="CPX-8806">
    <property type="entry name" value="20S proteasome complex"/>
</dbReference>
<dbReference type="ComplexPortal" id="CPX-8841">
    <property type="entry name" value="PA200-20S single-capped proteasome"/>
</dbReference>
<dbReference type="ComplexPortal" id="CPX-8842">
    <property type="entry name" value="PA28-alphabeta double-capped 20S proteasome complex"/>
</dbReference>
<dbReference type="ComplexPortal" id="CPX-9001">
    <property type="entry name" value="PA28-gamma single-capped 20S proteasome complex"/>
</dbReference>
<dbReference type="ComplexPortal" id="CPX-9002">
    <property type="entry name" value="PA28-alphabeta single-capped 20S proteasome complex"/>
</dbReference>
<dbReference type="ComplexPortal" id="CPX-9003">
    <property type="entry name" value="20S immunoproteasome complex"/>
</dbReference>
<dbReference type="ComplexPortal" id="CPX-9004">
    <property type="entry name" value="20S thymoproteasome complex"/>
</dbReference>
<dbReference type="ComplexPortal" id="CPX-9021">
    <property type="entry name" value="20S spermatoproteasome complex"/>
</dbReference>
<dbReference type="ComplexPortal" id="CPX-9022">
    <property type="entry name" value="PA28-gamma double-capped 20S proteasome complex"/>
</dbReference>
<dbReference type="ComplexPortal" id="CPX-9063">
    <property type="entry name" value="PA200-20S-PA200 double-capped proteasome complex"/>
</dbReference>
<dbReference type="ComplexPortal" id="CPX-9082">
    <property type="entry name" value="19S-20S-PA28-alphabeta hybrid proteasome complex"/>
</dbReference>
<dbReference type="ComplexPortal" id="CPX-9085">
    <property type="entry name" value="19S-20S-PA28-gamma hybrid proteasome complex"/>
</dbReference>
<dbReference type="ComplexPortal" id="CPX-9086">
    <property type="entry name" value="30S proteasome complex"/>
</dbReference>
<dbReference type="CORUM" id="P25789"/>
<dbReference type="DIP" id="DIP-29365N"/>
<dbReference type="FunCoup" id="P25789">
    <property type="interactions" value="2646"/>
</dbReference>
<dbReference type="IntAct" id="P25789">
    <property type="interactions" value="96"/>
</dbReference>
<dbReference type="MINT" id="P25789"/>
<dbReference type="STRING" id="9606.ENSP00000044462"/>
<dbReference type="BindingDB" id="P25789"/>
<dbReference type="ChEMBL" id="CHEMBL2364701"/>
<dbReference type="DrugBank" id="DB08515">
    <property type="generic name" value="(3AR,6R,6AS)-6-((S)-((S)-CYCLOHEX-2-ENYL)(HYDROXY)METHYL)-6A-METHYL-4-OXO-HEXAHYDRO-2H-FURO[3,2-C]PYRROLE-6-CARBALDEHYDE"/>
</dbReference>
<dbReference type="MEROPS" id="T01.973"/>
<dbReference type="GlyGen" id="P25789">
    <property type="glycosylation" value="5 sites, 1 O-linked glycan (5 sites)"/>
</dbReference>
<dbReference type="iPTMnet" id="P25789"/>
<dbReference type="MetOSite" id="P25789"/>
<dbReference type="PhosphoSitePlus" id="P25789"/>
<dbReference type="SwissPalm" id="P25789"/>
<dbReference type="BioMuta" id="PSMA4"/>
<dbReference type="DMDM" id="130861"/>
<dbReference type="jPOST" id="P25789"/>
<dbReference type="MassIVE" id="P25789"/>
<dbReference type="PaxDb" id="9606-ENSP00000044462"/>
<dbReference type="PeptideAtlas" id="P25789"/>
<dbReference type="ProteomicsDB" id="54292">
    <molecule id="P25789-1"/>
</dbReference>
<dbReference type="ProteomicsDB" id="54293">
    <molecule id="P25789-2"/>
</dbReference>
<dbReference type="Pumba" id="P25789"/>
<dbReference type="TopDownProteomics" id="P25789-1">
    <molecule id="P25789-1"/>
</dbReference>
<dbReference type="Antibodypedia" id="27657">
    <property type="antibodies" value="341 antibodies from 35 providers"/>
</dbReference>
<dbReference type="DNASU" id="5685"/>
<dbReference type="Ensembl" id="ENST00000044462.12">
    <molecule id="P25789-1"/>
    <property type="protein sequence ID" value="ENSP00000044462.7"/>
    <property type="gene ID" value="ENSG00000041357.16"/>
</dbReference>
<dbReference type="Ensembl" id="ENST00000413382.6">
    <molecule id="P25789-2"/>
    <property type="protein sequence ID" value="ENSP00000402118.2"/>
    <property type="gene ID" value="ENSG00000041357.16"/>
</dbReference>
<dbReference type="Ensembl" id="ENST00000559082.5">
    <molecule id="P25789-1"/>
    <property type="protein sequence ID" value="ENSP00000453887.1"/>
    <property type="gene ID" value="ENSG00000041357.16"/>
</dbReference>
<dbReference type="GeneID" id="5685"/>
<dbReference type="KEGG" id="hsa:5685"/>
<dbReference type="MANE-Select" id="ENST00000044462.12">
    <property type="protein sequence ID" value="ENSP00000044462.7"/>
    <property type="RefSeq nucleotide sequence ID" value="NM_002789.6"/>
    <property type="RefSeq protein sequence ID" value="NP_002780.1"/>
</dbReference>
<dbReference type="UCSC" id="uc002bdu.5">
    <molecule id="P25789-1"/>
    <property type="organism name" value="human"/>
</dbReference>
<dbReference type="AGR" id="HGNC:9533"/>
<dbReference type="CTD" id="5685"/>
<dbReference type="DisGeNET" id="5685"/>
<dbReference type="GeneCards" id="PSMA4"/>
<dbReference type="HGNC" id="HGNC:9533">
    <property type="gene designation" value="PSMA4"/>
</dbReference>
<dbReference type="HPA" id="ENSG00000041357">
    <property type="expression patterns" value="Low tissue specificity"/>
</dbReference>
<dbReference type="MIM" id="176846">
    <property type="type" value="gene"/>
</dbReference>
<dbReference type="neXtProt" id="NX_P25789"/>
<dbReference type="OpenTargets" id="ENSG00000041357"/>
<dbReference type="PharmGKB" id="PA33878"/>
<dbReference type="VEuPathDB" id="HostDB:ENSG00000041357"/>
<dbReference type="eggNOG" id="KOG0178">
    <property type="taxonomic scope" value="Eukaryota"/>
</dbReference>
<dbReference type="GeneTree" id="ENSGT00550000074827"/>
<dbReference type="InParanoid" id="P25789"/>
<dbReference type="OMA" id="YVLNDNM"/>
<dbReference type="OrthoDB" id="431557at2759"/>
<dbReference type="PAN-GO" id="P25789">
    <property type="GO annotations" value="5 GO annotations based on evolutionary models"/>
</dbReference>
<dbReference type="PhylomeDB" id="P25789"/>
<dbReference type="TreeFam" id="TF106209"/>
<dbReference type="BRENDA" id="3.4.25.1">
    <property type="organism ID" value="2681"/>
</dbReference>
<dbReference type="PathwayCommons" id="P25789"/>
<dbReference type="Reactome" id="R-HSA-1169091">
    <property type="pathway name" value="Activation of NF-kappaB in B cells"/>
</dbReference>
<dbReference type="Reactome" id="R-HSA-1234176">
    <property type="pathway name" value="Oxygen-dependent proline hydroxylation of Hypoxia-inducible Factor Alpha"/>
</dbReference>
<dbReference type="Reactome" id="R-HSA-1236974">
    <property type="pathway name" value="ER-Phagosome pathway"/>
</dbReference>
<dbReference type="Reactome" id="R-HSA-1236978">
    <property type="pathway name" value="Cross-presentation of soluble exogenous antigens (endosomes)"/>
</dbReference>
<dbReference type="Reactome" id="R-HSA-174084">
    <property type="pathway name" value="Autodegradation of Cdh1 by Cdh1:APC/C"/>
</dbReference>
<dbReference type="Reactome" id="R-HSA-174113">
    <property type="pathway name" value="SCF-beta-TrCP mediated degradation of Emi1"/>
</dbReference>
<dbReference type="Reactome" id="R-HSA-174154">
    <property type="pathway name" value="APC/C:Cdc20 mediated degradation of Securin"/>
</dbReference>
<dbReference type="Reactome" id="R-HSA-174178">
    <property type="pathway name" value="APC/C:Cdh1 mediated degradation of Cdc20 and other APC/C:Cdh1 targeted proteins in late mitosis/early G1"/>
</dbReference>
<dbReference type="Reactome" id="R-HSA-174184">
    <property type="pathway name" value="Cdc20:Phospho-APC/C mediated degradation of Cyclin A"/>
</dbReference>
<dbReference type="Reactome" id="R-HSA-180534">
    <property type="pathway name" value="Vpu mediated degradation of CD4"/>
</dbReference>
<dbReference type="Reactome" id="R-HSA-180585">
    <property type="pathway name" value="Vif-mediated degradation of APOBEC3G"/>
</dbReference>
<dbReference type="Reactome" id="R-HSA-187577">
    <property type="pathway name" value="SCF(Skp2)-mediated degradation of p27/p21"/>
</dbReference>
<dbReference type="Reactome" id="R-HSA-195253">
    <property type="pathway name" value="Degradation of beta-catenin by the destruction complex"/>
</dbReference>
<dbReference type="Reactome" id="R-HSA-202424">
    <property type="pathway name" value="Downstream TCR signaling"/>
</dbReference>
<dbReference type="Reactome" id="R-HSA-211733">
    <property type="pathway name" value="Regulation of activated PAK-2p34 by proteasome mediated degradation"/>
</dbReference>
<dbReference type="Reactome" id="R-HSA-2467813">
    <property type="pathway name" value="Separation of Sister Chromatids"/>
</dbReference>
<dbReference type="Reactome" id="R-HSA-2871837">
    <property type="pathway name" value="FCERI mediated NF-kB activation"/>
</dbReference>
<dbReference type="Reactome" id="R-HSA-349425">
    <property type="pathway name" value="Autodegradation of the E3 ubiquitin ligase COP1"/>
</dbReference>
<dbReference type="Reactome" id="R-HSA-350562">
    <property type="pathway name" value="Regulation of ornithine decarboxylase (ODC)"/>
</dbReference>
<dbReference type="Reactome" id="R-HSA-382556">
    <property type="pathway name" value="ABC-family proteins mediated transport"/>
</dbReference>
<dbReference type="Reactome" id="R-HSA-450408">
    <property type="pathway name" value="AUF1 (hnRNP D0) binds and destabilizes mRNA"/>
</dbReference>
<dbReference type="Reactome" id="R-HSA-4608870">
    <property type="pathway name" value="Asymmetric localization of PCP proteins"/>
</dbReference>
<dbReference type="Reactome" id="R-HSA-4641257">
    <property type="pathway name" value="Degradation of AXIN"/>
</dbReference>
<dbReference type="Reactome" id="R-HSA-4641258">
    <property type="pathway name" value="Degradation of DVL"/>
</dbReference>
<dbReference type="Reactome" id="R-HSA-5358346">
    <property type="pathway name" value="Hedgehog ligand biogenesis"/>
</dbReference>
<dbReference type="Reactome" id="R-HSA-5362768">
    <property type="pathway name" value="Hh mutants are degraded by ERAD"/>
</dbReference>
<dbReference type="Reactome" id="R-HSA-5607761">
    <property type="pathway name" value="Dectin-1 mediated noncanonical NF-kB signaling"/>
</dbReference>
<dbReference type="Reactome" id="R-HSA-5607764">
    <property type="pathway name" value="CLEC7A (Dectin-1) signaling"/>
</dbReference>
<dbReference type="Reactome" id="R-HSA-5610780">
    <property type="pathway name" value="Degradation of GLI1 by the proteasome"/>
</dbReference>
<dbReference type="Reactome" id="R-HSA-5610783">
    <property type="pathway name" value="Degradation of GLI2 by the proteasome"/>
</dbReference>
<dbReference type="Reactome" id="R-HSA-5610785">
    <property type="pathway name" value="GLI3 is processed to GLI3R by the proteasome"/>
</dbReference>
<dbReference type="Reactome" id="R-HSA-5632684">
    <property type="pathway name" value="Hedgehog 'on' state"/>
</dbReference>
<dbReference type="Reactome" id="R-HSA-5658442">
    <property type="pathway name" value="Regulation of RAS by GAPs"/>
</dbReference>
<dbReference type="Reactome" id="R-HSA-5668541">
    <property type="pathway name" value="TNFR2 non-canonical NF-kB pathway"/>
</dbReference>
<dbReference type="Reactome" id="R-HSA-5676590">
    <property type="pathway name" value="NIK--&gt;noncanonical NF-kB signaling"/>
</dbReference>
<dbReference type="Reactome" id="R-HSA-5678895">
    <property type="pathway name" value="Defective CFTR causes cystic fibrosis"/>
</dbReference>
<dbReference type="Reactome" id="R-HSA-5687128">
    <property type="pathway name" value="MAPK6/MAPK4 signaling"/>
</dbReference>
<dbReference type="Reactome" id="R-HSA-5689603">
    <property type="pathway name" value="UCH proteinases"/>
</dbReference>
<dbReference type="Reactome" id="R-HSA-5689880">
    <property type="pathway name" value="Ub-specific processing proteases"/>
</dbReference>
<dbReference type="Reactome" id="R-HSA-68867">
    <property type="pathway name" value="Assembly of the pre-replicative complex"/>
</dbReference>
<dbReference type="Reactome" id="R-HSA-68949">
    <property type="pathway name" value="Orc1 removal from chromatin"/>
</dbReference>
<dbReference type="Reactome" id="R-HSA-69017">
    <property type="pathway name" value="CDK-mediated phosphorylation and removal of Cdc6"/>
</dbReference>
<dbReference type="Reactome" id="R-HSA-69481">
    <property type="pathway name" value="G2/M Checkpoints"/>
</dbReference>
<dbReference type="Reactome" id="R-HSA-69601">
    <property type="pathway name" value="Ubiquitin Mediated Degradation of Phosphorylated Cdc25A"/>
</dbReference>
<dbReference type="Reactome" id="R-HSA-75815">
    <property type="pathway name" value="Ubiquitin-dependent degradation of Cyclin D"/>
</dbReference>
<dbReference type="Reactome" id="R-HSA-8852276">
    <property type="pathway name" value="The role of GTSE1 in G2/M progression after G2 checkpoint"/>
</dbReference>
<dbReference type="Reactome" id="R-HSA-8854050">
    <property type="pathway name" value="FBXL7 down-regulates AURKA during mitotic entry and in early mitosis"/>
</dbReference>
<dbReference type="Reactome" id="R-HSA-8939236">
    <property type="pathway name" value="RUNX1 regulates transcription of genes involved in differentiation of HSCs"/>
</dbReference>
<dbReference type="Reactome" id="R-HSA-8939902">
    <property type="pathway name" value="Regulation of RUNX2 expression and activity"/>
</dbReference>
<dbReference type="Reactome" id="R-HSA-8941858">
    <property type="pathway name" value="Regulation of RUNX3 expression and activity"/>
</dbReference>
<dbReference type="Reactome" id="R-HSA-8948751">
    <property type="pathway name" value="Regulation of PTEN stability and activity"/>
</dbReference>
<dbReference type="Reactome" id="R-HSA-8951664">
    <property type="pathway name" value="Neddylation"/>
</dbReference>
<dbReference type="Reactome" id="R-HSA-9010553">
    <property type="pathway name" value="Regulation of expression of SLITs and ROBOs"/>
</dbReference>
<dbReference type="Reactome" id="R-HSA-9020702">
    <property type="pathway name" value="Interleukin-1 signaling"/>
</dbReference>
<dbReference type="Reactome" id="R-HSA-9604323">
    <property type="pathway name" value="Negative regulation of NOTCH4 signaling"/>
</dbReference>
<dbReference type="Reactome" id="R-HSA-9755511">
    <property type="pathway name" value="KEAP1-NFE2L2 pathway"/>
</dbReference>
<dbReference type="Reactome" id="R-HSA-9762114">
    <property type="pathway name" value="GSK3B and BTRC:CUL1-mediated-degradation of NFE2L2"/>
</dbReference>
<dbReference type="Reactome" id="R-HSA-9824272">
    <property type="pathway name" value="Somitogenesis"/>
</dbReference>
<dbReference type="Reactome" id="R-HSA-983168">
    <property type="pathway name" value="Antigen processing: Ubiquitination &amp; Proteasome degradation"/>
</dbReference>
<dbReference type="Reactome" id="R-HSA-9907900">
    <property type="pathway name" value="Proteasome assembly"/>
</dbReference>
<dbReference type="SignaLink" id="P25789"/>
<dbReference type="SIGNOR" id="P25789"/>
<dbReference type="BioGRID-ORCS" id="5685">
    <property type="hits" value="811 hits in 1136 CRISPR screens"/>
</dbReference>
<dbReference type="CD-CODE" id="91857CE7">
    <property type="entry name" value="Nucleolus"/>
</dbReference>
<dbReference type="ChiTaRS" id="PSMA4">
    <property type="organism name" value="human"/>
</dbReference>
<dbReference type="EvolutionaryTrace" id="P25789"/>
<dbReference type="GeneWiki" id="PSMA4"/>
<dbReference type="GenomeRNAi" id="5685"/>
<dbReference type="Pharos" id="P25789">
    <property type="development level" value="Tbio"/>
</dbReference>
<dbReference type="PRO" id="PR:P25789"/>
<dbReference type="Proteomes" id="UP000005640">
    <property type="component" value="Chromosome 15"/>
</dbReference>
<dbReference type="RNAct" id="P25789">
    <property type="molecule type" value="protein"/>
</dbReference>
<dbReference type="Bgee" id="ENSG00000041357">
    <property type="expression patterns" value="Expressed in monocyte and 204 other cell types or tissues"/>
</dbReference>
<dbReference type="ExpressionAtlas" id="P25789">
    <property type="expression patterns" value="baseline and differential"/>
</dbReference>
<dbReference type="GO" id="GO:0005737">
    <property type="term" value="C:cytoplasm"/>
    <property type="evidence" value="ECO:0000314"/>
    <property type="project" value="UniProtKB"/>
</dbReference>
<dbReference type="GO" id="GO:0005829">
    <property type="term" value="C:cytosol"/>
    <property type="evidence" value="ECO:0000314"/>
    <property type="project" value="HPA"/>
</dbReference>
<dbReference type="GO" id="GO:0070062">
    <property type="term" value="C:extracellular exosome"/>
    <property type="evidence" value="ECO:0007005"/>
    <property type="project" value="UniProtKB"/>
</dbReference>
<dbReference type="GO" id="GO:0043231">
    <property type="term" value="C:intracellular membrane-bounded organelle"/>
    <property type="evidence" value="ECO:0000314"/>
    <property type="project" value="HPA"/>
</dbReference>
<dbReference type="GO" id="GO:0005654">
    <property type="term" value="C:nucleoplasm"/>
    <property type="evidence" value="ECO:0000314"/>
    <property type="project" value="HPA"/>
</dbReference>
<dbReference type="GO" id="GO:0005634">
    <property type="term" value="C:nucleus"/>
    <property type="evidence" value="ECO:0000314"/>
    <property type="project" value="UniProtKB"/>
</dbReference>
<dbReference type="GO" id="GO:0000932">
    <property type="term" value="C:P-body"/>
    <property type="evidence" value="ECO:0000250"/>
    <property type="project" value="UniProtKB"/>
</dbReference>
<dbReference type="GO" id="GO:0000502">
    <property type="term" value="C:proteasome complex"/>
    <property type="evidence" value="ECO:0000314"/>
    <property type="project" value="UniProtKB"/>
</dbReference>
<dbReference type="GO" id="GO:0005839">
    <property type="term" value="C:proteasome core complex"/>
    <property type="evidence" value="ECO:0000314"/>
    <property type="project" value="UniProtKB"/>
</dbReference>
<dbReference type="GO" id="GO:0019773">
    <property type="term" value="C:proteasome core complex, alpha-subunit complex"/>
    <property type="evidence" value="ECO:0000314"/>
    <property type="project" value="UniProtKB"/>
</dbReference>
<dbReference type="GO" id="GO:0043161">
    <property type="term" value="P:proteasome-mediated ubiquitin-dependent protein catabolic process"/>
    <property type="evidence" value="ECO:0000318"/>
    <property type="project" value="GO_Central"/>
</dbReference>
<dbReference type="CDD" id="cd03752">
    <property type="entry name" value="proteasome_alpha_type_4"/>
    <property type="match status" value="1"/>
</dbReference>
<dbReference type="FunFam" id="3.60.20.10:FF:000022">
    <property type="entry name" value="Proteasome subunit alpha type"/>
    <property type="match status" value="1"/>
</dbReference>
<dbReference type="Gene3D" id="3.60.20.10">
    <property type="entry name" value="Glutamine Phosphoribosylpyrophosphate, subunit 1, domain 1"/>
    <property type="match status" value="1"/>
</dbReference>
<dbReference type="InterPro" id="IPR029055">
    <property type="entry name" value="Ntn_hydrolases_N"/>
</dbReference>
<dbReference type="InterPro" id="IPR050115">
    <property type="entry name" value="Proteasome_alpha"/>
</dbReference>
<dbReference type="InterPro" id="IPR023332">
    <property type="entry name" value="Proteasome_alpha-type"/>
</dbReference>
<dbReference type="InterPro" id="IPR000426">
    <property type="entry name" value="Proteasome_asu_N"/>
</dbReference>
<dbReference type="InterPro" id="IPR016050">
    <property type="entry name" value="Proteasome_bsu_CS"/>
</dbReference>
<dbReference type="InterPro" id="IPR001353">
    <property type="entry name" value="Proteasome_sua/b"/>
</dbReference>
<dbReference type="NCBIfam" id="NF003075">
    <property type="entry name" value="PRK03996.1"/>
    <property type="match status" value="1"/>
</dbReference>
<dbReference type="PANTHER" id="PTHR11599">
    <property type="entry name" value="PROTEASOME SUBUNIT ALPHA/BETA"/>
    <property type="match status" value="1"/>
</dbReference>
<dbReference type="Pfam" id="PF00227">
    <property type="entry name" value="Proteasome"/>
    <property type="match status" value="1"/>
</dbReference>
<dbReference type="Pfam" id="PF10584">
    <property type="entry name" value="Proteasome_A_N"/>
    <property type="match status" value="1"/>
</dbReference>
<dbReference type="SMART" id="SM00948">
    <property type="entry name" value="Proteasome_A_N"/>
    <property type="match status" value="1"/>
</dbReference>
<dbReference type="SUPFAM" id="SSF56235">
    <property type="entry name" value="N-terminal nucleophile aminohydrolases (Ntn hydrolases)"/>
    <property type="match status" value="1"/>
</dbReference>
<dbReference type="PROSITE" id="PS00388">
    <property type="entry name" value="PROTEASOME_ALPHA_1"/>
    <property type="match status" value="1"/>
</dbReference>
<dbReference type="PROSITE" id="PS51475">
    <property type="entry name" value="PROTEASOME_ALPHA_2"/>
    <property type="match status" value="1"/>
</dbReference>